<sequence length="155" mass="16879">MADPDLDFASGDAGASATYPMQCSALRKNGFVVLKGRPCKIVEMSTSKTGKHGHAKVHLVGIDIFTNKKYEDICPSTHNMDVPNIKRNDYQLVDISEGFLSLMMDNGDVREDLRVPDGDLGKEIENKFAAGEEMLVTVLSAMGEESAVALKPMTK</sequence>
<feature type="chain" id="PRO_0000458228" description="Eukaryotic translation initiation factor 5A-1">
    <location>
        <begin position="1"/>
        <end position="155"/>
    </location>
</feature>
<feature type="modified residue" description="Hypusine" evidence="1">
    <location>
        <position position="51"/>
    </location>
</feature>
<gene>
    <name evidence="5" type="primary">eif5a</name>
    <name evidence="6" type="ORF">zgc:77099</name>
</gene>
<proteinExistence type="evidence at protein level"/>
<evidence type="ECO:0000250" key="1">
    <source>
        <dbReference type="UniProtKB" id="P10160"/>
    </source>
</evidence>
<evidence type="ECO:0000250" key="2">
    <source>
        <dbReference type="UniProtKB" id="P23301"/>
    </source>
</evidence>
<evidence type="ECO:0000250" key="3">
    <source>
        <dbReference type="UniProtKB" id="P63241"/>
    </source>
</evidence>
<evidence type="ECO:0000269" key="4">
    <source>
    </source>
</evidence>
<evidence type="ECO:0000303" key="5">
    <source>
    </source>
</evidence>
<evidence type="ECO:0000303" key="6">
    <source ref="2"/>
</evidence>
<evidence type="ECO:0000305" key="7"/>
<evidence type="ECO:0007744" key="8">
    <source>
        <dbReference type="PDB" id="7OYA"/>
    </source>
</evidence>
<organism>
    <name type="scientific">Danio rerio</name>
    <name type="common">Zebrafish</name>
    <name type="synonym">Brachydanio rerio</name>
    <dbReference type="NCBI Taxonomy" id="7955"/>
    <lineage>
        <taxon>Eukaryota</taxon>
        <taxon>Metazoa</taxon>
        <taxon>Chordata</taxon>
        <taxon>Craniata</taxon>
        <taxon>Vertebrata</taxon>
        <taxon>Euteleostomi</taxon>
        <taxon>Actinopterygii</taxon>
        <taxon>Neopterygii</taxon>
        <taxon>Teleostei</taxon>
        <taxon>Ostariophysi</taxon>
        <taxon>Cypriniformes</taxon>
        <taxon>Danionidae</taxon>
        <taxon>Danioninae</taxon>
        <taxon>Danio</taxon>
    </lineage>
</organism>
<comment type="function">
    <text evidence="2 3">Translation factor that promotes translation elongation and termination, particularly upon ribosome stalling at specific amino acid sequence contexts (By similarity). Binds between the exit (E) and peptidyl (P) site of the ribosome and promotes rescue of stalled ribosome: specifically required for efficient translation of polyproline-containing peptides as well as other motifs that stall the ribosome (By similarity). Acts as a ribosome quality control (RQC) cofactor by joining the RQC complex to facilitate peptidyl transfer during CAT tailing step (By similarity). Also involved in actin dynamics and cell cycle progression, mRNA decay and probably in a pathway involved in stress response and maintenance of cell wall integrity (By similarity). Is required for autophagy by assisting the ribosome in translating the ATG3 protein at a specific amino acid sequence, the 'ASP-ASP-Gly' motif, leading to the increase of the efficiency of ATG3 translation and facilitation of LC3B lipidation and autophagosome formation (By similarity).</text>
</comment>
<comment type="subunit">
    <text evidence="3 4">Binds to 80S ribosomes (PubMed:36653451). Actively translating ribosomes show mutually exclusive binding of eIF5a (eif5a or eif5a2) and eef2/eEF2 (By similarity). Interacts with dapl1/dap1b; interaction takes place at the polypeptide exit tunnel of hibernating ribosomes and prevents translation (PubMed:36653451).</text>
</comment>
<comment type="subcellular location">
    <subcellularLocation>
        <location evidence="3">Cytoplasm</location>
    </subcellularLocation>
    <subcellularLocation>
        <location evidence="3">Nucleus</location>
    </subcellularLocation>
    <subcellularLocation>
        <location evidence="3">Endoplasmic reticulum membrane</location>
        <topology evidence="3">Peripheral membrane protein</topology>
        <orientation evidence="3">Cytoplasmic side</orientation>
    </subcellularLocation>
    <text evidence="3">Hypusine modification promotes the nuclear export and cytoplasmic localization and there was a dynamic shift in the localization from predominantly cytoplasmic to primarily nuclear under apoptotic inducing conditions.</text>
</comment>
<comment type="PTM">
    <text evidence="3">Lys-51 undergoes hypusination, a unique post-translational modification that consists in the addition of a butylamino group from spermidine to lysine side chain, leading to the formation of the unusual amino acid hypusine. eIF-5As are the only known proteins to undergo this modification, which is essential for their function.</text>
</comment>
<comment type="similarity">
    <text evidence="7">Belongs to the eIF-5A family.</text>
</comment>
<name>IF5A1_DANRE</name>
<accession>Q6NX89</accession>
<accession>F6NH52</accession>
<accession>F6NKL5</accession>
<keyword id="KW-0002">3D-structure</keyword>
<keyword id="KW-0963">Cytoplasm</keyword>
<keyword id="KW-0251">Elongation factor</keyword>
<keyword id="KW-0256">Endoplasmic reticulum</keyword>
<keyword id="KW-0385">Hypusine</keyword>
<keyword id="KW-0396">Initiation factor</keyword>
<keyword id="KW-0472">Membrane</keyword>
<keyword id="KW-0539">Nucleus</keyword>
<keyword id="KW-0648">Protein biosynthesis</keyword>
<keyword id="KW-1185">Reference proteome</keyword>
<keyword id="KW-0694">RNA-binding</keyword>
<reference key="1">
    <citation type="journal article" date="2013" name="Nature">
        <title>The zebrafish reference genome sequence and its relationship to the human genome.</title>
        <authorList>
            <person name="Howe K."/>
            <person name="Clark M.D."/>
            <person name="Torroja C.F."/>
            <person name="Torrance J."/>
            <person name="Berthelot C."/>
            <person name="Muffato M."/>
            <person name="Collins J.E."/>
            <person name="Humphray S."/>
            <person name="McLaren K."/>
            <person name="Matthews L."/>
            <person name="McLaren S."/>
            <person name="Sealy I."/>
            <person name="Caccamo M."/>
            <person name="Churcher C."/>
            <person name="Scott C."/>
            <person name="Barrett J.C."/>
            <person name="Koch R."/>
            <person name="Rauch G.J."/>
            <person name="White S."/>
            <person name="Chow W."/>
            <person name="Kilian B."/>
            <person name="Quintais L.T."/>
            <person name="Guerra-Assuncao J.A."/>
            <person name="Zhou Y."/>
            <person name="Gu Y."/>
            <person name="Yen J."/>
            <person name="Vogel J.H."/>
            <person name="Eyre T."/>
            <person name="Redmond S."/>
            <person name="Banerjee R."/>
            <person name="Chi J."/>
            <person name="Fu B."/>
            <person name="Langley E."/>
            <person name="Maguire S.F."/>
            <person name="Laird G.K."/>
            <person name="Lloyd D."/>
            <person name="Kenyon E."/>
            <person name="Donaldson S."/>
            <person name="Sehra H."/>
            <person name="Almeida-King J."/>
            <person name="Loveland J."/>
            <person name="Trevanion S."/>
            <person name="Jones M."/>
            <person name="Quail M."/>
            <person name="Willey D."/>
            <person name="Hunt A."/>
            <person name="Burton J."/>
            <person name="Sims S."/>
            <person name="McLay K."/>
            <person name="Plumb B."/>
            <person name="Davis J."/>
            <person name="Clee C."/>
            <person name="Oliver K."/>
            <person name="Clark R."/>
            <person name="Riddle C."/>
            <person name="Elliot D."/>
            <person name="Threadgold G."/>
            <person name="Harden G."/>
            <person name="Ware D."/>
            <person name="Begum S."/>
            <person name="Mortimore B."/>
            <person name="Kerry G."/>
            <person name="Heath P."/>
            <person name="Phillimore B."/>
            <person name="Tracey A."/>
            <person name="Corby N."/>
            <person name="Dunn M."/>
            <person name="Johnson C."/>
            <person name="Wood J."/>
            <person name="Clark S."/>
            <person name="Pelan S."/>
            <person name="Griffiths G."/>
            <person name="Smith M."/>
            <person name="Glithero R."/>
            <person name="Howden P."/>
            <person name="Barker N."/>
            <person name="Lloyd C."/>
            <person name="Stevens C."/>
            <person name="Harley J."/>
            <person name="Holt K."/>
            <person name="Panagiotidis G."/>
            <person name="Lovell J."/>
            <person name="Beasley H."/>
            <person name="Henderson C."/>
            <person name="Gordon D."/>
            <person name="Auger K."/>
            <person name="Wright D."/>
            <person name="Collins J."/>
            <person name="Raisen C."/>
            <person name="Dyer L."/>
            <person name="Leung K."/>
            <person name="Robertson L."/>
            <person name="Ambridge K."/>
            <person name="Leongamornlert D."/>
            <person name="McGuire S."/>
            <person name="Gilderthorp R."/>
            <person name="Griffiths C."/>
            <person name="Manthravadi D."/>
            <person name="Nichol S."/>
            <person name="Barker G."/>
            <person name="Whitehead S."/>
            <person name="Kay M."/>
            <person name="Brown J."/>
            <person name="Murnane C."/>
            <person name="Gray E."/>
            <person name="Humphries M."/>
            <person name="Sycamore N."/>
            <person name="Barker D."/>
            <person name="Saunders D."/>
            <person name="Wallis J."/>
            <person name="Babbage A."/>
            <person name="Hammond S."/>
            <person name="Mashreghi-Mohammadi M."/>
            <person name="Barr L."/>
            <person name="Martin S."/>
            <person name="Wray P."/>
            <person name="Ellington A."/>
            <person name="Matthews N."/>
            <person name="Ellwood M."/>
            <person name="Woodmansey R."/>
            <person name="Clark G."/>
            <person name="Cooper J."/>
            <person name="Tromans A."/>
            <person name="Grafham D."/>
            <person name="Skuce C."/>
            <person name="Pandian R."/>
            <person name="Andrews R."/>
            <person name="Harrison E."/>
            <person name="Kimberley A."/>
            <person name="Garnett J."/>
            <person name="Fosker N."/>
            <person name="Hall R."/>
            <person name="Garner P."/>
            <person name="Kelly D."/>
            <person name="Bird C."/>
            <person name="Palmer S."/>
            <person name="Gehring I."/>
            <person name="Berger A."/>
            <person name="Dooley C.M."/>
            <person name="Ersan-Urun Z."/>
            <person name="Eser C."/>
            <person name="Geiger H."/>
            <person name="Geisler M."/>
            <person name="Karotki L."/>
            <person name="Kirn A."/>
            <person name="Konantz J."/>
            <person name="Konantz M."/>
            <person name="Oberlander M."/>
            <person name="Rudolph-Geiger S."/>
            <person name="Teucke M."/>
            <person name="Lanz C."/>
            <person name="Raddatz G."/>
            <person name="Osoegawa K."/>
            <person name="Zhu B."/>
            <person name="Rapp A."/>
            <person name="Widaa S."/>
            <person name="Langford C."/>
            <person name="Yang F."/>
            <person name="Schuster S.C."/>
            <person name="Carter N.P."/>
            <person name="Harrow J."/>
            <person name="Ning Z."/>
            <person name="Herrero J."/>
            <person name="Searle S.M."/>
            <person name="Enright A."/>
            <person name="Geisler R."/>
            <person name="Plasterk R.H."/>
            <person name="Lee C."/>
            <person name="Westerfield M."/>
            <person name="de Jong P.J."/>
            <person name="Zon L.I."/>
            <person name="Postlethwait J.H."/>
            <person name="Nusslein-Volhard C."/>
            <person name="Hubbard T.J."/>
            <person name="Roest Crollius H."/>
            <person name="Rogers J."/>
            <person name="Stemple D.L."/>
        </authorList>
    </citation>
    <scope>NUCLEOTIDE SEQUENCE [LARGE SCALE GENOMIC DNA]</scope>
    <source>
        <strain>Tuebingen</strain>
    </source>
</reference>
<reference key="2">
    <citation type="submission" date="2007-08" db="EMBL/GenBank/DDBJ databases">
        <authorList>
            <consortium name="NIH - Zebrafish Gene Collection (ZGC) project"/>
        </authorList>
    </citation>
    <scope>NUCLEOTIDE SEQUENCE [LARGE SCALE MRNA]</scope>
    <source>
        <tissue>Kidney</tissue>
        <tissue>Skin</tissue>
    </source>
</reference>
<reference evidence="8" key="3">
    <citation type="journal article" date="2023" name="Nature">
        <title>A molecular network of conserved factors keeps ribosomes dormant in the egg.</title>
        <authorList>
            <person name="Leesch F."/>
            <person name="Lorenzo-Orts L."/>
            <person name="Pribitzer C."/>
            <person name="Grishkovskaya I."/>
            <person name="Roehsner J."/>
            <person name="Chugunova A."/>
            <person name="Matzinger M."/>
            <person name="Roitinger E."/>
            <person name="Belacic K."/>
            <person name="Kandolf S."/>
            <person name="Lin T.Y."/>
            <person name="Mechtler K."/>
            <person name="Meinhart A."/>
            <person name="Haselbach D."/>
            <person name="Pauli A."/>
        </authorList>
    </citation>
    <scope>STRUCTURE BY ELECTRON MICROSCOPY (3.20 ANGSTROMS) IN COMPLEX WITH RIBOSOME AND DAP1B</scope>
    <scope>INTERACTION WITH DAP1B</scope>
</reference>
<protein>
    <recommendedName>
        <fullName evidence="7">Eukaryotic translation initiation factor 5A-1</fullName>
        <shortName>eIF-5A-1</shortName>
        <shortName>eIF-5A1</shortName>
    </recommendedName>
</protein>
<dbReference type="EMBL" id="CR354583">
    <property type="status" value="NOT_ANNOTATED_CDS"/>
    <property type="molecule type" value="Genomic_DNA"/>
</dbReference>
<dbReference type="EMBL" id="BC067190">
    <property type="protein sequence ID" value="AAH67190.1"/>
    <property type="molecule type" value="mRNA"/>
</dbReference>
<dbReference type="EMBL" id="BC152189">
    <property type="protein sequence ID" value="AAI52190.1"/>
    <property type="molecule type" value="mRNA"/>
</dbReference>
<dbReference type="RefSeq" id="NP_998350.1">
    <property type="nucleotide sequence ID" value="NM_213185.1"/>
</dbReference>
<dbReference type="RefSeq" id="XP_005162832.1">
    <property type="nucleotide sequence ID" value="XM_005162775.4"/>
</dbReference>
<dbReference type="RefSeq" id="XP_005162833.1">
    <property type="nucleotide sequence ID" value="XM_005162776.4"/>
</dbReference>
<dbReference type="RefSeq" id="XP_005162834.1">
    <property type="nucleotide sequence ID" value="XM_005162777.2"/>
</dbReference>
<dbReference type="PDB" id="7OYA">
    <property type="method" value="EM"/>
    <property type="resolution" value="3.20 A"/>
    <property type="chains" value="11=1-155"/>
</dbReference>
<dbReference type="PDBsum" id="7OYA"/>
<dbReference type="EMDB" id="EMD-13111"/>
<dbReference type="SMR" id="Q6NX89"/>
<dbReference type="FunCoup" id="Q6NX89">
    <property type="interactions" value="2377"/>
</dbReference>
<dbReference type="STRING" id="7955.ENSDARP00000099088"/>
<dbReference type="PaxDb" id="7955-ENSDARP00000027654"/>
<dbReference type="Ensembl" id="ENSDART00000009609">
    <property type="protein sequence ID" value="ENSDARP00000027654"/>
    <property type="gene ID" value="ENSDARG00000017235"/>
</dbReference>
<dbReference type="Ensembl" id="ENSDART00000113739">
    <property type="protein sequence ID" value="ENSDARP00000099088"/>
    <property type="gene ID" value="ENSDARG00000017235"/>
</dbReference>
<dbReference type="Ensembl" id="ENSDART00000133782">
    <property type="protein sequence ID" value="ENSDARP00000118000"/>
    <property type="gene ID" value="ENSDARG00000017235"/>
</dbReference>
<dbReference type="Ensembl" id="ENSDART00000135496">
    <property type="protein sequence ID" value="ENSDARP00000114277"/>
    <property type="gene ID" value="ENSDARG00000017235"/>
</dbReference>
<dbReference type="Ensembl" id="ENSDART00000140647">
    <property type="protein sequence ID" value="ENSDARP00000117595"/>
    <property type="gene ID" value="ENSDARG00000017235"/>
</dbReference>
<dbReference type="GeneID" id="406464"/>
<dbReference type="KEGG" id="dre:406464"/>
<dbReference type="AGR" id="ZFIN:ZDB-GENE-040426-2229"/>
<dbReference type="CTD" id="1984"/>
<dbReference type="ZFIN" id="ZDB-GENE-040426-2229">
    <property type="gene designation" value="eif5a"/>
</dbReference>
<dbReference type="eggNOG" id="KOG3271">
    <property type="taxonomic scope" value="Eukaryota"/>
</dbReference>
<dbReference type="InParanoid" id="Q6NX89"/>
<dbReference type="OMA" id="DINEGYL"/>
<dbReference type="OrthoDB" id="9975114at2759"/>
<dbReference type="TreeFam" id="TF101534"/>
<dbReference type="Reactome" id="R-DRE-204626">
    <property type="pathway name" value="Hypusine synthesis from eIF5A-lysine"/>
</dbReference>
<dbReference type="PRO" id="PR:Q6NX89"/>
<dbReference type="Proteomes" id="UP000000437">
    <property type="component" value="Chromosome 24"/>
</dbReference>
<dbReference type="Bgee" id="ENSDARG00000017235">
    <property type="expression patterns" value="Expressed in granulocyte and 34 other cell types or tissues"/>
</dbReference>
<dbReference type="ExpressionAtlas" id="Q6NX89">
    <property type="expression patterns" value="baseline and differential"/>
</dbReference>
<dbReference type="GO" id="GO:0005789">
    <property type="term" value="C:endoplasmic reticulum membrane"/>
    <property type="evidence" value="ECO:0007669"/>
    <property type="project" value="UniProtKB-SubCell"/>
</dbReference>
<dbReference type="GO" id="GO:0005634">
    <property type="term" value="C:nucleus"/>
    <property type="evidence" value="ECO:0007669"/>
    <property type="project" value="UniProtKB-SubCell"/>
</dbReference>
<dbReference type="GO" id="GO:0043022">
    <property type="term" value="F:ribosome binding"/>
    <property type="evidence" value="ECO:0007669"/>
    <property type="project" value="InterPro"/>
</dbReference>
<dbReference type="GO" id="GO:0003723">
    <property type="term" value="F:RNA binding"/>
    <property type="evidence" value="ECO:0007669"/>
    <property type="project" value="UniProtKB-KW"/>
</dbReference>
<dbReference type="GO" id="GO:0003746">
    <property type="term" value="F:translation elongation factor activity"/>
    <property type="evidence" value="ECO:0000318"/>
    <property type="project" value="GO_Central"/>
</dbReference>
<dbReference type="GO" id="GO:0003743">
    <property type="term" value="F:translation initiation factor activity"/>
    <property type="evidence" value="ECO:0007669"/>
    <property type="project" value="UniProtKB-KW"/>
</dbReference>
<dbReference type="GO" id="GO:0045901">
    <property type="term" value="P:positive regulation of translational elongation"/>
    <property type="evidence" value="ECO:0007669"/>
    <property type="project" value="InterPro"/>
</dbReference>
<dbReference type="GO" id="GO:0045905">
    <property type="term" value="P:positive regulation of translational termination"/>
    <property type="evidence" value="ECO:0007669"/>
    <property type="project" value="InterPro"/>
</dbReference>
<dbReference type="GO" id="GO:0006414">
    <property type="term" value="P:translational elongation"/>
    <property type="evidence" value="ECO:0000250"/>
    <property type="project" value="UniProtKB"/>
</dbReference>
<dbReference type="CDD" id="cd04468">
    <property type="entry name" value="S1_eIF5A"/>
    <property type="match status" value="1"/>
</dbReference>
<dbReference type="FunFam" id="2.30.30.30:FF:000007">
    <property type="entry name" value="Eukaryotic translation initiation factor 5A"/>
    <property type="match status" value="1"/>
</dbReference>
<dbReference type="FunFam" id="2.40.50.140:FF:000034">
    <property type="entry name" value="Eukaryotic translation initiation factor 5A"/>
    <property type="match status" value="1"/>
</dbReference>
<dbReference type="Gene3D" id="2.30.30.30">
    <property type="match status" value="1"/>
</dbReference>
<dbReference type="Gene3D" id="2.40.50.140">
    <property type="entry name" value="Nucleic acid-binding proteins"/>
    <property type="match status" value="1"/>
</dbReference>
<dbReference type="InterPro" id="IPR001884">
    <property type="entry name" value="IF5A-like"/>
</dbReference>
<dbReference type="InterPro" id="IPR048670">
    <property type="entry name" value="IF5A-like_N"/>
</dbReference>
<dbReference type="InterPro" id="IPR012340">
    <property type="entry name" value="NA-bd_OB-fold"/>
</dbReference>
<dbReference type="InterPro" id="IPR014722">
    <property type="entry name" value="Rib_uL2_dom2"/>
</dbReference>
<dbReference type="InterPro" id="IPR019769">
    <property type="entry name" value="Trans_elong_IF5A_hypusine_site"/>
</dbReference>
<dbReference type="InterPro" id="IPR020189">
    <property type="entry name" value="Transl_elong_IF5A_C"/>
</dbReference>
<dbReference type="InterPro" id="IPR008991">
    <property type="entry name" value="Translation_prot_SH3-like_sf"/>
</dbReference>
<dbReference type="NCBIfam" id="TIGR00037">
    <property type="entry name" value="eIF_5A"/>
    <property type="match status" value="1"/>
</dbReference>
<dbReference type="PANTHER" id="PTHR11673">
    <property type="entry name" value="TRANSLATION INITIATION FACTOR 5A FAMILY MEMBER"/>
    <property type="match status" value="1"/>
</dbReference>
<dbReference type="Pfam" id="PF01287">
    <property type="entry name" value="eIF-5a"/>
    <property type="match status" value="1"/>
</dbReference>
<dbReference type="Pfam" id="PF21485">
    <property type="entry name" value="IF5A-like_N"/>
    <property type="match status" value="1"/>
</dbReference>
<dbReference type="PIRSF" id="PIRSF003025">
    <property type="entry name" value="eIF5A"/>
    <property type="match status" value="1"/>
</dbReference>
<dbReference type="SMART" id="SM01376">
    <property type="entry name" value="eIF-5a"/>
    <property type="match status" value="1"/>
</dbReference>
<dbReference type="SUPFAM" id="SSF50249">
    <property type="entry name" value="Nucleic acid-binding proteins"/>
    <property type="match status" value="1"/>
</dbReference>
<dbReference type="SUPFAM" id="SSF50104">
    <property type="entry name" value="Translation proteins SH3-like domain"/>
    <property type="match status" value="1"/>
</dbReference>
<dbReference type="PROSITE" id="PS00302">
    <property type="entry name" value="IF5A_HYPUSINE"/>
    <property type="match status" value="1"/>
</dbReference>